<comment type="function">
    <text evidence="3">Plays a role in intermediary metabolism and energy production. It may tightly associate or interact with the pyruvate dehydrogenase complex.</text>
</comment>
<comment type="catalytic activity">
    <reaction evidence="3">
        <text>D-threo-isocitrate + NADP(+) = 2-oxoglutarate + CO2 + NADPH</text>
        <dbReference type="Rhea" id="RHEA:19629"/>
        <dbReference type="ChEBI" id="CHEBI:15562"/>
        <dbReference type="ChEBI" id="CHEBI:16526"/>
        <dbReference type="ChEBI" id="CHEBI:16810"/>
        <dbReference type="ChEBI" id="CHEBI:57783"/>
        <dbReference type="ChEBI" id="CHEBI:58349"/>
        <dbReference type="EC" id="1.1.1.42"/>
    </reaction>
</comment>
<comment type="cofactor">
    <cofactor evidence="2">
        <name>Mg(2+)</name>
        <dbReference type="ChEBI" id="CHEBI:18420"/>
    </cofactor>
    <cofactor evidence="2">
        <name>Mn(2+)</name>
        <dbReference type="ChEBI" id="CHEBI:29035"/>
    </cofactor>
    <text evidence="2">Binds 1 Mg(2+) or Mn(2+) ion per subunit.</text>
</comment>
<comment type="subunit">
    <text evidence="2">Homodimer.</text>
</comment>
<comment type="subcellular location">
    <subcellularLocation>
        <location evidence="5">Mitochondrion</location>
    </subcellularLocation>
</comment>
<comment type="PTM">
    <text evidence="3">Acetylation at Lys-413 dramatically reduces catalytic activity. Deacetylated by SIRT3 (By similarity).</text>
</comment>
<comment type="miscellaneous">
    <text>On the 2D-gel the determined pI of this protein (spot P8) is: 9.0, its MW is: 42 kDa.</text>
</comment>
<comment type="similarity">
    <text evidence="6">Belongs to the isocitrate and isopropylmalate dehydrogenases family.</text>
</comment>
<gene>
    <name type="primary">Idh2</name>
</gene>
<name>IDHP_RAT</name>
<evidence type="ECO:0000250" key="1">
    <source>
        <dbReference type="UniProtKB" id="O75874"/>
    </source>
</evidence>
<evidence type="ECO:0000250" key="2">
    <source>
        <dbReference type="UniProtKB" id="P33198"/>
    </source>
</evidence>
<evidence type="ECO:0000250" key="3">
    <source>
        <dbReference type="UniProtKB" id="P48735"/>
    </source>
</evidence>
<evidence type="ECO:0000250" key="4">
    <source>
        <dbReference type="UniProtKB" id="P54071"/>
    </source>
</evidence>
<evidence type="ECO:0000269" key="5">
    <source ref="2"/>
</evidence>
<evidence type="ECO:0000305" key="6"/>
<protein>
    <recommendedName>
        <fullName>Isocitrate dehydrogenase [NADP], mitochondrial</fullName>
        <shortName>IDH</shortName>
        <ecNumber evidence="3">1.1.1.42</ecNumber>
    </recommendedName>
    <alternativeName>
        <fullName>ICD-M</fullName>
    </alternativeName>
    <alternativeName>
        <fullName>IDP</fullName>
    </alternativeName>
    <alternativeName>
        <fullName>NADP(+)-specific ICDH</fullName>
    </alternativeName>
    <alternativeName>
        <fullName>Oxalosuccinate decarboxylase</fullName>
    </alternativeName>
</protein>
<keyword id="KW-0007">Acetylation</keyword>
<keyword id="KW-0903">Direct protein sequencing</keyword>
<keyword id="KW-0329">Glyoxylate bypass</keyword>
<keyword id="KW-0460">Magnesium</keyword>
<keyword id="KW-0464">Manganese</keyword>
<keyword id="KW-0479">Metal-binding</keyword>
<keyword id="KW-0496">Mitochondrion</keyword>
<keyword id="KW-0521">NADP</keyword>
<keyword id="KW-0560">Oxidoreductase</keyword>
<keyword id="KW-1185">Reference proteome</keyword>
<keyword id="KW-0809">Transit peptide</keyword>
<keyword id="KW-0816">Tricarboxylic acid cycle</keyword>
<feature type="transit peptide" description="Mitochondrion" evidence="5">
    <location>
        <begin position="1"/>
        <end position="39"/>
    </location>
</feature>
<feature type="chain" id="PRO_0000083581" description="Isocitrate dehydrogenase [NADP], mitochondrial">
    <location>
        <begin position="40"/>
        <end position="452"/>
    </location>
</feature>
<feature type="binding site" evidence="1">
    <location>
        <begin position="115"/>
        <end position="117"/>
    </location>
    <ligand>
        <name>NADP(+)</name>
        <dbReference type="ChEBI" id="CHEBI:58349"/>
    </ligand>
</feature>
<feature type="binding site" evidence="2">
    <location>
        <position position="117"/>
    </location>
    <ligand>
        <name>D-threo-isocitrate</name>
        <dbReference type="ChEBI" id="CHEBI:15562"/>
    </ligand>
</feature>
<feature type="binding site" evidence="1">
    <location>
        <position position="122"/>
    </location>
    <ligand>
        <name>NADP(+)</name>
        <dbReference type="ChEBI" id="CHEBI:58349"/>
    </ligand>
</feature>
<feature type="binding site" evidence="2">
    <location>
        <begin position="134"/>
        <end position="140"/>
    </location>
    <ligand>
        <name>D-threo-isocitrate</name>
        <dbReference type="ChEBI" id="CHEBI:15562"/>
    </ligand>
</feature>
<feature type="binding site" evidence="2">
    <location>
        <position position="149"/>
    </location>
    <ligand>
        <name>D-threo-isocitrate</name>
        <dbReference type="ChEBI" id="CHEBI:15562"/>
    </ligand>
</feature>
<feature type="binding site" evidence="2">
    <location>
        <position position="172"/>
    </location>
    <ligand>
        <name>D-threo-isocitrate</name>
        <dbReference type="ChEBI" id="CHEBI:15562"/>
    </ligand>
</feature>
<feature type="binding site" evidence="2">
    <location>
        <position position="291"/>
    </location>
    <ligand>
        <name>Mn(2+)</name>
        <dbReference type="ChEBI" id="CHEBI:29035"/>
    </ligand>
</feature>
<feature type="binding site" evidence="1">
    <location>
        <position position="299"/>
    </location>
    <ligand>
        <name>NADP(+)</name>
        <dbReference type="ChEBI" id="CHEBI:58349"/>
    </ligand>
</feature>
<feature type="binding site" evidence="2">
    <location>
        <position position="314"/>
    </location>
    <ligand>
        <name>Mn(2+)</name>
        <dbReference type="ChEBI" id="CHEBI:29035"/>
    </ligand>
</feature>
<feature type="binding site" evidence="1">
    <location>
        <begin position="349"/>
        <end position="354"/>
    </location>
    <ligand>
        <name>NADP(+)</name>
        <dbReference type="ChEBI" id="CHEBI:58349"/>
    </ligand>
</feature>
<feature type="binding site" evidence="1">
    <location>
        <position position="367"/>
    </location>
    <ligand>
        <name>NADP(+)</name>
        <dbReference type="ChEBI" id="CHEBI:58349"/>
    </ligand>
</feature>
<feature type="site" description="Critical for catalysis" evidence="2">
    <location>
        <position position="179"/>
    </location>
</feature>
<feature type="site" description="Critical for catalysis" evidence="2">
    <location>
        <position position="251"/>
    </location>
</feature>
<feature type="modified residue" description="N6-acetyllysine" evidence="4">
    <location>
        <position position="45"/>
    </location>
</feature>
<feature type="modified residue" description="N6-acetyllysine" evidence="4">
    <location>
        <position position="48"/>
    </location>
</feature>
<feature type="modified residue" description="N6-acetyllysine" evidence="3">
    <location>
        <position position="67"/>
    </location>
</feature>
<feature type="modified residue" description="N6-acetyllysine" evidence="4">
    <location>
        <position position="69"/>
    </location>
</feature>
<feature type="modified residue" description="N6-acetyllysine; alternate" evidence="4">
    <location>
        <position position="80"/>
    </location>
</feature>
<feature type="modified residue" description="N6-succinyllysine; alternate" evidence="4">
    <location>
        <position position="80"/>
    </location>
</feature>
<feature type="modified residue" description="N6-acetyllysine; alternate" evidence="3">
    <location>
        <position position="106"/>
    </location>
</feature>
<feature type="modified residue" description="N6-succinyllysine; alternate" evidence="4">
    <location>
        <position position="106"/>
    </location>
</feature>
<feature type="modified residue" description="N6-acetyllysine" evidence="3">
    <location>
        <position position="155"/>
    </location>
</feature>
<feature type="modified residue" description="N6-acetyllysine; alternate" evidence="3">
    <location>
        <position position="166"/>
    </location>
</feature>
<feature type="modified residue" description="N6-succinyllysine; alternate" evidence="4">
    <location>
        <position position="166"/>
    </location>
</feature>
<feature type="modified residue" description="N6-acetyllysine; alternate" evidence="3">
    <location>
        <position position="180"/>
    </location>
</feature>
<feature type="modified residue" description="N6-succinyllysine; alternate" evidence="4">
    <location>
        <position position="180"/>
    </location>
</feature>
<feature type="modified residue" description="N6-acetyllysine; alternate" evidence="4">
    <location>
        <position position="193"/>
    </location>
</feature>
<feature type="modified residue" description="N6-succinyllysine; alternate" evidence="4">
    <location>
        <position position="193"/>
    </location>
</feature>
<feature type="modified residue" description="N6-acetyllysine" evidence="4">
    <location>
        <position position="199"/>
    </location>
</feature>
<feature type="modified residue" description="N6-acetyllysine; alternate" evidence="3">
    <location>
        <position position="256"/>
    </location>
</feature>
<feature type="modified residue" description="N6-succinyllysine; alternate" evidence="4">
    <location>
        <position position="256"/>
    </location>
</feature>
<feature type="modified residue" description="N6-acetyllysine" evidence="3">
    <location>
        <position position="263"/>
    </location>
</feature>
<feature type="modified residue" description="N6-acetyllysine" evidence="3">
    <location>
        <position position="272"/>
    </location>
</feature>
<feature type="modified residue" description="N6-acetyllysine" evidence="3">
    <location>
        <position position="275"/>
    </location>
</feature>
<feature type="modified residue" description="N6-acetyllysine" evidence="4">
    <location>
        <position position="280"/>
    </location>
</feature>
<feature type="modified residue" description="N6-acetyllysine; alternate" evidence="3">
    <location>
        <position position="282"/>
    </location>
</feature>
<feature type="modified residue" description="N6-succinyllysine; alternate" evidence="4">
    <location>
        <position position="282"/>
    </location>
</feature>
<feature type="modified residue" description="N6-acetyllysine; alternate" evidence="4">
    <location>
        <position position="384"/>
    </location>
</feature>
<feature type="modified residue" description="N6-succinyllysine; alternate" evidence="4">
    <location>
        <position position="384"/>
    </location>
</feature>
<feature type="modified residue" description="N6-acetyllysine" evidence="4">
    <location>
        <position position="400"/>
    </location>
</feature>
<feature type="modified residue" description="N6-acetyllysine" evidence="3">
    <location>
        <position position="413"/>
    </location>
</feature>
<feature type="modified residue" description="N6-acetyllysine" evidence="3">
    <location>
        <position position="442"/>
    </location>
</feature>
<feature type="sequence conflict" description="In Ref. 2; AA sequence." evidence="6" ref="2">
    <original>P</original>
    <variation>K</variation>
    <location>
        <position position="49"/>
    </location>
</feature>
<feature type="sequence conflict" description="In Ref. 2; AA sequence." evidence="6" ref="2">
    <original>E</original>
    <variation>V</variation>
    <location>
        <position position="52"/>
    </location>
</feature>
<reference key="1">
    <citation type="journal article" date="2004" name="Genome Res.">
        <title>The status, quality, and expansion of the NIH full-length cDNA project: the Mammalian Gene Collection (MGC).</title>
        <authorList>
            <consortium name="The MGC Project Team"/>
        </authorList>
    </citation>
    <scope>NUCLEOTIDE SEQUENCE [LARGE SCALE MRNA]</scope>
    <source>
        <tissue>Kidney</tissue>
    </source>
</reference>
<reference key="2">
    <citation type="submission" date="1998-09" db="UniProtKB">
        <authorList>
            <person name="Li X.-P."/>
            <person name="Pleissner K.-P."/>
            <person name="Scheler C."/>
            <person name="Regitz-Zagrosek V."/>
            <person name="Salikov J."/>
            <person name="Jungblut P.R."/>
        </authorList>
    </citation>
    <scope>PROTEIN SEQUENCE OF 40-52</scope>
    <scope>SUBCELLULAR LOCATION</scope>
    <source>
        <strain>Wistar</strain>
        <tissue>Heart</tissue>
    </source>
</reference>
<reference key="3">
    <citation type="submission" date="2007-04" db="UniProtKB">
        <authorList>
            <person name="Lubec G."/>
            <person name="Chen W.-Q."/>
        </authorList>
    </citation>
    <scope>PROTEIN SEQUENCE OF 61-67; 70-89; 113-122; 141-149; 181-188; 244-251; 262-272; 289-299; 341-353 AND 414-426</scope>
    <scope>IDENTIFICATION BY MASS SPECTROMETRY</scope>
    <source>
        <strain>Sprague-Dawley</strain>
        <tissue>Hippocampus</tissue>
    </source>
</reference>
<organism>
    <name type="scientific">Rattus norvegicus</name>
    <name type="common">Rat</name>
    <dbReference type="NCBI Taxonomy" id="10116"/>
    <lineage>
        <taxon>Eukaryota</taxon>
        <taxon>Metazoa</taxon>
        <taxon>Chordata</taxon>
        <taxon>Craniata</taxon>
        <taxon>Vertebrata</taxon>
        <taxon>Euteleostomi</taxon>
        <taxon>Mammalia</taxon>
        <taxon>Eutheria</taxon>
        <taxon>Euarchontoglires</taxon>
        <taxon>Glires</taxon>
        <taxon>Rodentia</taxon>
        <taxon>Myomorpha</taxon>
        <taxon>Muroidea</taxon>
        <taxon>Muridae</taxon>
        <taxon>Murinae</taxon>
        <taxon>Rattus</taxon>
    </lineage>
</organism>
<proteinExistence type="evidence at protein level"/>
<dbReference type="EC" id="1.1.1.42" evidence="3"/>
<dbReference type="EMBL" id="BC076398">
    <property type="protein sequence ID" value="AAH76398.1"/>
    <property type="molecule type" value="mRNA"/>
</dbReference>
<dbReference type="RefSeq" id="NP_001014183.1">
    <property type="nucleotide sequence ID" value="NM_001014161.1"/>
</dbReference>
<dbReference type="SMR" id="P56574"/>
<dbReference type="BioGRID" id="262802">
    <property type="interactions" value="7"/>
</dbReference>
<dbReference type="FunCoup" id="P56574">
    <property type="interactions" value="1825"/>
</dbReference>
<dbReference type="IntAct" id="P56574">
    <property type="interactions" value="4"/>
</dbReference>
<dbReference type="MINT" id="P56574"/>
<dbReference type="STRING" id="10116.ENSRNOP00000019059"/>
<dbReference type="CarbonylDB" id="P56574"/>
<dbReference type="GlyGen" id="P56574">
    <property type="glycosylation" value="4 sites, 1 O-linked glycan (4 sites)"/>
</dbReference>
<dbReference type="iPTMnet" id="P56574"/>
<dbReference type="PhosphoSitePlus" id="P56574"/>
<dbReference type="jPOST" id="P56574"/>
<dbReference type="PaxDb" id="10116-ENSRNOP00000019059"/>
<dbReference type="GeneID" id="361596"/>
<dbReference type="KEGG" id="rno:361596"/>
<dbReference type="UCSC" id="RGD:1597139">
    <property type="organism name" value="rat"/>
</dbReference>
<dbReference type="AGR" id="RGD:1597139"/>
<dbReference type="CTD" id="3418"/>
<dbReference type="RGD" id="1597139">
    <property type="gene designation" value="Idh2"/>
</dbReference>
<dbReference type="VEuPathDB" id="HostDB:ENSRNOG00000013949"/>
<dbReference type="eggNOG" id="KOG1526">
    <property type="taxonomic scope" value="Eukaryota"/>
</dbReference>
<dbReference type="InParanoid" id="P56574"/>
<dbReference type="OrthoDB" id="248923at2759"/>
<dbReference type="PhylomeDB" id="P56574"/>
<dbReference type="TreeFam" id="TF300428"/>
<dbReference type="BRENDA" id="1.1.1.42">
    <property type="organism ID" value="5301"/>
</dbReference>
<dbReference type="Reactome" id="R-RNO-2151201">
    <property type="pathway name" value="Transcriptional activation of mitochondrial biogenesis"/>
</dbReference>
<dbReference type="Reactome" id="R-RNO-71403">
    <property type="pathway name" value="Citric acid cycle (TCA cycle)"/>
</dbReference>
<dbReference type="Reactome" id="R-RNO-9837999">
    <property type="pathway name" value="Mitochondrial protein degradation"/>
</dbReference>
<dbReference type="Reactome" id="R-RNO-9854311">
    <property type="pathway name" value="Maturation of TCA enzymes and regulation of TCA cycle"/>
</dbReference>
<dbReference type="SABIO-RK" id="P56574"/>
<dbReference type="PRO" id="PR:P56574"/>
<dbReference type="Proteomes" id="UP000002494">
    <property type="component" value="Chromosome 1"/>
</dbReference>
<dbReference type="Bgee" id="ENSRNOG00000013949">
    <property type="expression patterns" value="Expressed in heart and 19 other cell types or tissues"/>
</dbReference>
<dbReference type="ExpressionAtlas" id="P56574">
    <property type="expression patterns" value="baseline and differential"/>
</dbReference>
<dbReference type="GO" id="GO:0005829">
    <property type="term" value="C:cytosol"/>
    <property type="evidence" value="ECO:0000266"/>
    <property type="project" value="RGD"/>
</dbReference>
<dbReference type="GO" id="GO:0005739">
    <property type="term" value="C:mitochondrion"/>
    <property type="evidence" value="ECO:0000318"/>
    <property type="project" value="GO_Central"/>
</dbReference>
<dbReference type="GO" id="GO:0005777">
    <property type="term" value="C:peroxisome"/>
    <property type="evidence" value="ECO:0000266"/>
    <property type="project" value="RGD"/>
</dbReference>
<dbReference type="GO" id="GO:0004450">
    <property type="term" value="F:isocitrate dehydrogenase (NADP+) activity"/>
    <property type="evidence" value="ECO:0000314"/>
    <property type="project" value="RGD"/>
</dbReference>
<dbReference type="GO" id="GO:0000287">
    <property type="term" value="F:magnesium ion binding"/>
    <property type="evidence" value="ECO:0000250"/>
    <property type="project" value="UniProtKB"/>
</dbReference>
<dbReference type="GO" id="GO:0051287">
    <property type="term" value="F:NAD binding"/>
    <property type="evidence" value="ECO:0007669"/>
    <property type="project" value="InterPro"/>
</dbReference>
<dbReference type="GO" id="GO:0006103">
    <property type="term" value="P:2-oxoglutarate metabolic process"/>
    <property type="evidence" value="ECO:0000250"/>
    <property type="project" value="UniProtKB"/>
</dbReference>
<dbReference type="GO" id="GO:0006097">
    <property type="term" value="P:glyoxylate cycle"/>
    <property type="evidence" value="ECO:0007669"/>
    <property type="project" value="UniProtKB-KW"/>
</dbReference>
<dbReference type="GO" id="GO:0006102">
    <property type="term" value="P:isocitrate metabolic process"/>
    <property type="evidence" value="ECO:0000250"/>
    <property type="project" value="UniProtKB"/>
</dbReference>
<dbReference type="GO" id="GO:0006741">
    <property type="term" value="P:NADP biosynthetic process"/>
    <property type="evidence" value="ECO:0000315"/>
    <property type="project" value="RGD"/>
</dbReference>
<dbReference type="GO" id="GO:0006739">
    <property type="term" value="P:NADP metabolic process"/>
    <property type="evidence" value="ECO:0000318"/>
    <property type="project" value="GO_Central"/>
</dbReference>
<dbReference type="GO" id="GO:1903976">
    <property type="term" value="P:negative regulation of glial cell migration"/>
    <property type="evidence" value="ECO:0000315"/>
    <property type="project" value="RGD"/>
</dbReference>
<dbReference type="GO" id="GO:0060253">
    <property type="term" value="P:negative regulation of glial cell proliferation"/>
    <property type="evidence" value="ECO:0000315"/>
    <property type="project" value="RGD"/>
</dbReference>
<dbReference type="GO" id="GO:1904465">
    <property type="term" value="P:negative regulation of matrix metallopeptidase secretion"/>
    <property type="evidence" value="ECO:0000315"/>
    <property type="project" value="RGD"/>
</dbReference>
<dbReference type="GO" id="GO:0006099">
    <property type="term" value="P:tricarboxylic acid cycle"/>
    <property type="evidence" value="ECO:0007669"/>
    <property type="project" value="UniProtKB-KW"/>
</dbReference>
<dbReference type="FunFam" id="3.40.718.10:FF:000002">
    <property type="entry name" value="Isocitrate dehydrogenase [NADP]"/>
    <property type="match status" value="1"/>
</dbReference>
<dbReference type="Gene3D" id="3.40.718.10">
    <property type="entry name" value="Isopropylmalate Dehydrogenase"/>
    <property type="match status" value="1"/>
</dbReference>
<dbReference type="InterPro" id="IPR019818">
    <property type="entry name" value="IsoCit/isopropylmalate_DH_CS"/>
</dbReference>
<dbReference type="InterPro" id="IPR004790">
    <property type="entry name" value="Isocitrate_DH_NADP"/>
</dbReference>
<dbReference type="InterPro" id="IPR024084">
    <property type="entry name" value="IsoPropMal-DH-like_dom"/>
</dbReference>
<dbReference type="NCBIfam" id="TIGR00127">
    <property type="entry name" value="nadp_idh_euk"/>
    <property type="match status" value="1"/>
</dbReference>
<dbReference type="NCBIfam" id="NF006156">
    <property type="entry name" value="PRK08299.1"/>
    <property type="match status" value="1"/>
</dbReference>
<dbReference type="PANTHER" id="PTHR11822:SF21">
    <property type="entry name" value="ISOCITRATE DEHYDROGENASE [NADP], MITOCHONDRIAL"/>
    <property type="match status" value="1"/>
</dbReference>
<dbReference type="PANTHER" id="PTHR11822">
    <property type="entry name" value="NADP-SPECIFIC ISOCITRATE DEHYDROGENASE"/>
    <property type="match status" value="1"/>
</dbReference>
<dbReference type="Pfam" id="PF00180">
    <property type="entry name" value="Iso_dh"/>
    <property type="match status" value="1"/>
</dbReference>
<dbReference type="PIRSF" id="PIRSF000108">
    <property type="entry name" value="IDH_NADP"/>
    <property type="match status" value="1"/>
</dbReference>
<dbReference type="SMART" id="SM01329">
    <property type="entry name" value="Iso_dh"/>
    <property type="match status" value="1"/>
</dbReference>
<dbReference type="SUPFAM" id="SSF53659">
    <property type="entry name" value="Isocitrate/Isopropylmalate dehydrogenase-like"/>
    <property type="match status" value="1"/>
</dbReference>
<dbReference type="PROSITE" id="PS00470">
    <property type="entry name" value="IDH_IMDH"/>
    <property type="match status" value="1"/>
</dbReference>
<sequence>MAGYLRAVSSLCRASGSTRTWAPAALNVPSWPEQPRRHYAEKRIKVEKPVVEMDGDEMTRIIWQFIKEKLILPHVDVQLKYFDLGLPNRDQTNDQVTIDSALATQKYSVAVKCATITPDEARVEEFKLKKMWKSPNGTIRNILGGTVFREPIICKNIPRLVPGWTKPITIGRHAHGDQYKATDFVVDRAGMFKLVFTPKDGSGAKEWEVYNFPAGGVGMGMYNTDESISGFAHSCFQYSIQKKWPLYLSTKNTIMKAYDGRFKDIFQEIFDKHYKTDFDKNKIWYEHRLIDDMVAQVLKSSGGFVWACKNYDGDVQSDILAQGFGSLGLMTSVLVCPDGKTIEAEAAHGTVTRHYREHQKGRPTSTNPIASIFAWTRGLEHRGKLDGNQDLIRFAQTLEKVCVQTVESGAMTKDLAGCIHGLSNVKLNEHFLNTTDFLDTIKSNLDRALGKQ</sequence>
<accession>P56574</accession>
<accession>Q6DGF1</accession>